<name>RL13_GEOSW</name>
<organism>
    <name type="scientific">Geobacillus sp. (strain WCH70)</name>
    <dbReference type="NCBI Taxonomy" id="471223"/>
    <lineage>
        <taxon>Bacteria</taxon>
        <taxon>Bacillati</taxon>
        <taxon>Bacillota</taxon>
        <taxon>Bacilli</taxon>
        <taxon>Bacillales</taxon>
        <taxon>Anoxybacillaceae</taxon>
        <taxon>Geobacillus</taxon>
    </lineage>
</organism>
<gene>
    <name evidence="1" type="primary">rplM</name>
    <name type="ordered locus">GWCH70_0144</name>
</gene>
<feature type="chain" id="PRO_1000214955" description="Large ribosomal subunit protein uL13">
    <location>
        <begin position="1"/>
        <end position="145"/>
    </location>
</feature>
<keyword id="KW-0687">Ribonucleoprotein</keyword>
<keyword id="KW-0689">Ribosomal protein</keyword>
<protein>
    <recommendedName>
        <fullName evidence="1">Large ribosomal subunit protein uL13</fullName>
    </recommendedName>
    <alternativeName>
        <fullName evidence="2">50S ribosomal protein L13</fullName>
    </alternativeName>
</protein>
<evidence type="ECO:0000255" key="1">
    <source>
        <dbReference type="HAMAP-Rule" id="MF_01366"/>
    </source>
</evidence>
<evidence type="ECO:0000305" key="2"/>
<comment type="function">
    <text evidence="1">This protein is one of the early assembly proteins of the 50S ribosomal subunit, although it is not seen to bind rRNA by itself. It is important during the early stages of 50S assembly.</text>
</comment>
<comment type="subunit">
    <text evidence="1">Part of the 50S ribosomal subunit.</text>
</comment>
<comment type="similarity">
    <text evidence="1">Belongs to the universal ribosomal protein uL13 family.</text>
</comment>
<proteinExistence type="inferred from homology"/>
<sequence>MRTTYMAKPNEVERKWYVVDAAGKTLGRLASEVAAILRGKHKPTFTPHVDCGDHVIIINAEKIELTGKKLTKKLYYRHSLHPGGLKVRTALEMRTNYPEQMLERAIRGMLPKGRLGRQMFKKLHVYRGSEHPHQAQKPEVYELRG</sequence>
<dbReference type="EMBL" id="CP001638">
    <property type="protein sequence ID" value="ACS23084.1"/>
    <property type="molecule type" value="Genomic_DNA"/>
</dbReference>
<dbReference type="SMR" id="C5D3V0"/>
<dbReference type="STRING" id="471223.GWCH70_0144"/>
<dbReference type="KEGG" id="gwc:GWCH70_0144"/>
<dbReference type="eggNOG" id="COG0102">
    <property type="taxonomic scope" value="Bacteria"/>
</dbReference>
<dbReference type="HOGENOM" id="CLU_082184_2_2_9"/>
<dbReference type="OrthoDB" id="9801330at2"/>
<dbReference type="GO" id="GO:0022625">
    <property type="term" value="C:cytosolic large ribosomal subunit"/>
    <property type="evidence" value="ECO:0007669"/>
    <property type="project" value="TreeGrafter"/>
</dbReference>
<dbReference type="GO" id="GO:0003729">
    <property type="term" value="F:mRNA binding"/>
    <property type="evidence" value="ECO:0007669"/>
    <property type="project" value="TreeGrafter"/>
</dbReference>
<dbReference type="GO" id="GO:0003735">
    <property type="term" value="F:structural constituent of ribosome"/>
    <property type="evidence" value="ECO:0007669"/>
    <property type="project" value="InterPro"/>
</dbReference>
<dbReference type="GO" id="GO:0017148">
    <property type="term" value="P:negative regulation of translation"/>
    <property type="evidence" value="ECO:0007669"/>
    <property type="project" value="TreeGrafter"/>
</dbReference>
<dbReference type="GO" id="GO:0006412">
    <property type="term" value="P:translation"/>
    <property type="evidence" value="ECO:0007669"/>
    <property type="project" value="UniProtKB-UniRule"/>
</dbReference>
<dbReference type="CDD" id="cd00392">
    <property type="entry name" value="Ribosomal_L13"/>
    <property type="match status" value="1"/>
</dbReference>
<dbReference type="FunFam" id="3.90.1180.10:FF:000001">
    <property type="entry name" value="50S ribosomal protein L13"/>
    <property type="match status" value="1"/>
</dbReference>
<dbReference type="Gene3D" id="3.90.1180.10">
    <property type="entry name" value="Ribosomal protein L13"/>
    <property type="match status" value="1"/>
</dbReference>
<dbReference type="HAMAP" id="MF_01366">
    <property type="entry name" value="Ribosomal_uL13"/>
    <property type="match status" value="1"/>
</dbReference>
<dbReference type="InterPro" id="IPR005822">
    <property type="entry name" value="Ribosomal_uL13"/>
</dbReference>
<dbReference type="InterPro" id="IPR005823">
    <property type="entry name" value="Ribosomal_uL13_bac-type"/>
</dbReference>
<dbReference type="InterPro" id="IPR023563">
    <property type="entry name" value="Ribosomal_uL13_CS"/>
</dbReference>
<dbReference type="InterPro" id="IPR036899">
    <property type="entry name" value="Ribosomal_uL13_sf"/>
</dbReference>
<dbReference type="NCBIfam" id="TIGR01066">
    <property type="entry name" value="rplM_bact"/>
    <property type="match status" value="1"/>
</dbReference>
<dbReference type="PANTHER" id="PTHR11545:SF2">
    <property type="entry name" value="LARGE RIBOSOMAL SUBUNIT PROTEIN UL13M"/>
    <property type="match status" value="1"/>
</dbReference>
<dbReference type="PANTHER" id="PTHR11545">
    <property type="entry name" value="RIBOSOMAL PROTEIN L13"/>
    <property type="match status" value="1"/>
</dbReference>
<dbReference type="Pfam" id="PF00572">
    <property type="entry name" value="Ribosomal_L13"/>
    <property type="match status" value="1"/>
</dbReference>
<dbReference type="PIRSF" id="PIRSF002181">
    <property type="entry name" value="Ribosomal_L13"/>
    <property type="match status" value="1"/>
</dbReference>
<dbReference type="SUPFAM" id="SSF52161">
    <property type="entry name" value="Ribosomal protein L13"/>
    <property type="match status" value="1"/>
</dbReference>
<dbReference type="PROSITE" id="PS00783">
    <property type="entry name" value="RIBOSOMAL_L13"/>
    <property type="match status" value="1"/>
</dbReference>
<reference key="1">
    <citation type="submission" date="2009-06" db="EMBL/GenBank/DDBJ databases">
        <title>Complete sequence of chromosome of Geopacillus sp. WCH70.</title>
        <authorList>
            <consortium name="US DOE Joint Genome Institute"/>
            <person name="Lucas S."/>
            <person name="Copeland A."/>
            <person name="Lapidus A."/>
            <person name="Glavina del Rio T."/>
            <person name="Dalin E."/>
            <person name="Tice H."/>
            <person name="Bruce D."/>
            <person name="Goodwin L."/>
            <person name="Pitluck S."/>
            <person name="Chertkov O."/>
            <person name="Brettin T."/>
            <person name="Detter J.C."/>
            <person name="Han C."/>
            <person name="Larimer F."/>
            <person name="Land M."/>
            <person name="Hauser L."/>
            <person name="Kyrpides N."/>
            <person name="Mikhailova N."/>
            <person name="Brumm P."/>
            <person name="Mead D.A."/>
            <person name="Richardson P."/>
        </authorList>
    </citation>
    <scope>NUCLEOTIDE SEQUENCE [LARGE SCALE GENOMIC DNA]</scope>
    <source>
        <strain>WCH70</strain>
    </source>
</reference>
<accession>C5D3V0</accession>